<sequence>MAKLEICCFGAECALIAERSGADRIELCTSPSEGGVTPSYGILKQVIDLVRIPVHPIIRPRGGDFCYSQADFAAMKNDISMIRDMGFSGAVVGILNEEGHIDLPKMAILMELAGPLAITFHRAFDMCINPLLALDQLTQLGVARILTSGQQANAELGLPLLRTLNEKTQGPIIMAGAGVRLSNIQKFLDSGLQEIHSSAGKQAPSTMNYRKAGVTMSSDSEVDEFTHYCVDEDVVGAMKDIMSIYTTSVN</sequence>
<reference key="1">
    <citation type="journal article" date="2008" name="J. Bacteriol.">
        <title>Complete genome sequence of uropathogenic Proteus mirabilis, a master of both adherence and motility.</title>
        <authorList>
            <person name="Pearson M.M."/>
            <person name="Sebaihia M."/>
            <person name="Churcher C."/>
            <person name="Quail M.A."/>
            <person name="Seshasayee A.S."/>
            <person name="Luscombe N.M."/>
            <person name="Abdellah Z."/>
            <person name="Arrosmith C."/>
            <person name="Atkin B."/>
            <person name="Chillingworth T."/>
            <person name="Hauser H."/>
            <person name="Jagels K."/>
            <person name="Moule S."/>
            <person name="Mungall K."/>
            <person name="Norbertczak H."/>
            <person name="Rabbinowitsch E."/>
            <person name="Walker D."/>
            <person name="Whithead S."/>
            <person name="Thomson N.R."/>
            <person name="Rather P.N."/>
            <person name="Parkhill J."/>
            <person name="Mobley H.L.T."/>
        </authorList>
    </citation>
    <scope>NUCLEOTIDE SEQUENCE [LARGE SCALE GENOMIC DNA]</scope>
    <source>
        <strain>HI4320</strain>
    </source>
</reference>
<dbReference type="EMBL" id="AM942759">
    <property type="protein sequence ID" value="CAR42389.1"/>
    <property type="molecule type" value="Genomic_DNA"/>
</dbReference>
<dbReference type="RefSeq" id="WP_004242710.1">
    <property type="nucleotide sequence ID" value="NC_010554.1"/>
</dbReference>
<dbReference type="SMR" id="B4ETN7"/>
<dbReference type="EnsemblBacteria" id="CAR42389">
    <property type="protein sequence ID" value="CAR42389"/>
    <property type="gene ID" value="PMI1105"/>
</dbReference>
<dbReference type="GeneID" id="6801039"/>
<dbReference type="KEGG" id="pmr:PMI1105"/>
<dbReference type="eggNOG" id="COG3142">
    <property type="taxonomic scope" value="Bacteria"/>
</dbReference>
<dbReference type="HOGENOM" id="CLU_050555_3_1_6"/>
<dbReference type="Proteomes" id="UP000008319">
    <property type="component" value="Chromosome"/>
</dbReference>
<dbReference type="GO" id="GO:0005737">
    <property type="term" value="C:cytoplasm"/>
    <property type="evidence" value="ECO:0007669"/>
    <property type="project" value="UniProtKB-SubCell"/>
</dbReference>
<dbReference type="GO" id="GO:0005507">
    <property type="term" value="F:copper ion binding"/>
    <property type="evidence" value="ECO:0007669"/>
    <property type="project" value="TreeGrafter"/>
</dbReference>
<dbReference type="FunFam" id="3.20.20.380:FF:000001">
    <property type="entry name" value="Copper homeostasis protein CutC"/>
    <property type="match status" value="1"/>
</dbReference>
<dbReference type="Gene3D" id="3.20.20.380">
    <property type="entry name" value="Copper homeostasis (CutC) domain"/>
    <property type="match status" value="1"/>
</dbReference>
<dbReference type="HAMAP" id="MF_00795">
    <property type="entry name" value="CutC"/>
    <property type="match status" value="1"/>
</dbReference>
<dbReference type="InterPro" id="IPR005627">
    <property type="entry name" value="CutC-like"/>
</dbReference>
<dbReference type="InterPro" id="IPR036822">
    <property type="entry name" value="CutC-like_dom_sf"/>
</dbReference>
<dbReference type="NCBIfam" id="NF008603">
    <property type="entry name" value="PRK11572.1"/>
    <property type="match status" value="1"/>
</dbReference>
<dbReference type="PANTHER" id="PTHR12598">
    <property type="entry name" value="COPPER HOMEOSTASIS PROTEIN CUTC"/>
    <property type="match status" value="1"/>
</dbReference>
<dbReference type="PANTHER" id="PTHR12598:SF0">
    <property type="entry name" value="COPPER HOMEOSTASIS PROTEIN CUTC HOMOLOG"/>
    <property type="match status" value="1"/>
</dbReference>
<dbReference type="Pfam" id="PF03932">
    <property type="entry name" value="CutC"/>
    <property type="match status" value="1"/>
</dbReference>
<dbReference type="SUPFAM" id="SSF110395">
    <property type="entry name" value="CutC-like"/>
    <property type="match status" value="1"/>
</dbReference>
<proteinExistence type="inferred from homology"/>
<accession>B4ETN7</accession>
<comment type="subcellular location">
    <subcellularLocation>
        <location evidence="1">Cytoplasm</location>
    </subcellularLocation>
</comment>
<comment type="similarity">
    <text evidence="1">Belongs to the CutC family.</text>
</comment>
<comment type="caution">
    <text evidence="1">Once thought to be involved in copper homeostasis, experiments in E.coli have shown this is not the case.</text>
</comment>
<feature type="chain" id="PRO_1000133841" description="PF03932 family protein CutC">
    <location>
        <begin position="1"/>
        <end position="250"/>
    </location>
</feature>
<name>CUTC_PROMH</name>
<keyword id="KW-0963">Cytoplasm</keyword>
<keyword id="KW-1185">Reference proteome</keyword>
<protein>
    <recommendedName>
        <fullName evidence="1">PF03932 family protein CutC</fullName>
    </recommendedName>
</protein>
<gene>
    <name evidence="1" type="primary">cutC</name>
    <name type="ordered locus">PMI1105</name>
</gene>
<organism>
    <name type="scientific">Proteus mirabilis (strain HI4320)</name>
    <dbReference type="NCBI Taxonomy" id="529507"/>
    <lineage>
        <taxon>Bacteria</taxon>
        <taxon>Pseudomonadati</taxon>
        <taxon>Pseudomonadota</taxon>
        <taxon>Gammaproteobacteria</taxon>
        <taxon>Enterobacterales</taxon>
        <taxon>Morganellaceae</taxon>
        <taxon>Proteus</taxon>
    </lineage>
</organism>
<evidence type="ECO:0000255" key="1">
    <source>
        <dbReference type="HAMAP-Rule" id="MF_00795"/>
    </source>
</evidence>